<comment type="function">
    <text evidence="1">Involved in the TonB-dependent energy-dependent transport of various receptor-bound substrates.</text>
</comment>
<comment type="subunit">
    <text evidence="1">The accessory proteins ExbB and ExbD seem to form a complex with TonB.</text>
</comment>
<comment type="subcellular location">
    <subcellularLocation>
        <location evidence="3">Cell inner membrane</location>
        <topology evidence="3">Single-pass type II membrane protein</topology>
    </subcellularLocation>
</comment>
<comment type="similarity">
    <text evidence="3">Belongs to the ExbD/TolR family.</text>
</comment>
<evidence type="ECO:0000250" key="1"/>
<evidence type="ECO:0000255" key="2"/>
<evidence type="ECO:0000305" key="3"/>
<organism>
    <name type="scientific">Xanthomonas campestris pv. campestris (strain ATCC 33913 / DSM 3586 / NCPPB 528 / LMG 568 / P 25)</name>
    <dbReference type="NCBI Taxonomy" id="190485"/>
    <lineage>
        <taxon>Bacteria</taxon>
        <taxon>Pseudomonadati</taxon>
        <taxon>Pseudomonadota</taxon>
        <taxon>Gammaproteobacteria</taxon>
        <taxon>Lysobacterales</taxon>
        <taxon>Lysobacteraceae</taxon>
        <taxon>Xanthomonas</taxon>
    </lineage>
</organism>
<feature type="chain" id="PRO_0000129135" description="Biopolymer transport protein exbD2">
    <location>
        <begin position="1"/>
        <end position="136"/>
    </location>
</feature>
<feature type="topological domain" description="Cytoplasmic" evidence="2">
    <location>
        <begin position="1"/>
        <end position="23"/>
    </location>
</feature>
<feature type="transmembrane region" description="Helical" evidence="2">
    <location>
        <begin position="24"/>
        <end position="44"/>
    </location>
</feature>
<feature type="topological domain" description="Periplasmic" evidence="2">
    <location>
        <begin position="45"/>
        <end position="136"/>
    </location>
</feature>
<gene>
    <name type="primary">exbD2</name>
    <name type="ordered locus">XCC0011</name>
</gene>
<accession>P0C7I9</accession>
<accession>O34258</accession>
<keyword id="KW-0997">Cell inner membrane</keyword>
<keyword id="KW-1003">Cell membrane</keyword>
<keyword id="KW-0472">Membrane</keyword>
<keyword id="KW-0653">Protein transport</keyword>
<keyword id="KW-1185">Reference proteome</keyword>
<keyword id="KW-0812">Transmembrane</keyword>
<keyword id="KW-1133">Transmembrane helix</keyword>
<keyword id="KW-0813">Transport</keyword>
<proteinExistence type="inferred from homology"/>
<dbReference type="EMBL" id="AE008922">
    <property type="protein sequence ID" value="AAM39330.1"/>
    <property type="molecule type" value="Genomic_DNA"/>
</dbReference>
<dbReference type="RefSeq" id="NP_635406.1">
    <property type="nucleotide sequence ID" value="NC_003902.1"/>
</dbReference>
<dbReference type="RefSeq" id="WP_011035269.1">
    <property type="nucleotide sequence ID" value="NC_003902.1"/>
</dbReference>
<dbReference type="SMR" id="P0C7I9"/>
<dbReference type="STRING" id="190485.XCC0011"/>
<dbReference type="EnsemblBacteria" id="AAM39330">
    <property type="protein sequence ID" value="AAM39330"/>
    <property type="gene ID" value="XCC0011"/>
</dbReference>
<dbReference type="KEGG" id="xcc:XCC0011"/>
<dbReference type="PATRIC" id="fig|190485.4.peg.11"/>
<dbReference type="eggNOG" id="COG0848">
    <property type="taxonomic scope" value="Bacteria"/>
</dbReference>
<dbReference type="HOGENOM" id="CLU_085305_1_1_6"/>
<dbReference type="OrthoDB" id="9798629at2"/>
<dbReference type="Proteomes" id="UP000001010">
    <property type="component" value="Chromosome"/>
</dbReference>
<dbReference type="GO" id="GO:0005886">
    <property type="term" value="C:plasma membrane"/>
    <property type="evidence" value="ECO:0000318"/>
    <property type="project" value="GO_Central"/>
</dbReference>
<dbReference type="GO" id="GO:0022857">
    <property type="term" value="F:transmembrane transporter activity"/>
    <property type="evidence" value="ECO:0007669"/>
    <property type="project" value="InterPro"/>
</dbReference>
<dbReference type="GO" id="GO:0015031">
    <property type="term" value="P:protein transport"/>
    <property type="evidence" value="ECO:0007669"/>
    <property type="project" value="UniProtKB-KW"/>
</dbReference>
<dbReference type="Gene3D" id="3.30.420.270">
    <property type="match status" value="1"/>
</dbReference>
<dbReference type="InterPro" id="IPR003400">
    <property type="entry name" value="ExbD"/>
</dbReference>
<dbReference type="PANTHER" id="PTHR30558:SF12">
    <property type="entry name" value="BIOPOLYMER TRANSPORT PROTEIN EXBD"/>
    <property type="match status" value="1"/>
</dbReference>
<dbReference type="PANTHER" id="PTHR30558">
    <property type="entry name" value="EXBD MEMBRANE COMPONENT OF PMF-DRIVEN MACROMOLECULE IMPORT SYSTEM"/>
    <property type="match status" value="1"/>
</dbReference>
<dbReference type="Pfam" id="PF02472">
    <property type="entry name" value="ExbD"/>
    <property type="match status" value="1"/>
</dbReference>
<name>EXBD2_XANCP</name>
<sequence length="136" mass="14996">MAFSTGGNRGPMADINVTPLVDVMLVLLIIFIVTAPIMTYPIAVDLPQRVLNPPPQTTEPPPPIELRIDASNQVFWNNSPTPVAQLQQKMEEVVQADPTNQPELRIDANEDAEYEVMAKVLAAAKNSQMKKIGFMQ</sequence>
<protein>
    <recommendedName>
        <fullName>Biopolymer transport protein exbD2</fullName>
    </recommendedName>
</protein>
<reference key="1">
    <citation type="journal article" date="2002" name="Nature">
        <title>Comparison of the genomes of two Xanthomonas pathogens with differing host specificities.</title>
        <authorList>
            <person name="da Silva A.C.R."/>
            <person name="Ferro J.A."/>
            <person name="Reinach F.C."/>
            <person name="Farah C.S."/>
            <person name="Furlan L.R."/>
            <person name="Quaggio R.B."/>
            <person name="Monteiro-Vitorello C.B."/>
            <person name="Van Sluys M.A."/>
            <person name="Almeida N.F. Jr."/>
            <person name="Alves L.M.C."/>
            <person name="do Amaral A.M."/>
            <person name="Bertolini M.C."/>
            <person name="Camargo L.E.A."/>
            <person name="Camarotte G."/>
            <person name="Cannavan F."/>
            <person name="Cardozo J."/>
            <person name="Chambergo F."/>
            <person name="Ciapina L.P."/>
            <person name="Cicarelli R.M.B."/>
            <person name="Coutinho L.L."/>
            <person name="Cursino-Santos J.R."/>
            <person name="El-Dorry H."/>
            <person name="Faria J.B."/>
            <person name="Ferreira A.J.S."/>
            <person name="Ferreira R.C.C."/>
            <person name="Ferro M.I.T."/>
            <person name="Formighieri E.F."/>
            <person name="Franco M.C."/>
            <person name="Greggio C.C."/>
            <person name="Gruber A."/>
            <person name="Katsuyama A.M."/>
            <person name="Kishi L.T."/>
            <person name="Leite R.P."/>
            <person name="Lemos E.G.M."/>
            <person name="Lemos M.V.F."/>
            <person name="Locali E.C."/>
            <person name="Machado M.A."/>
            <person name="Madeira A.M.B.N."/>
            <person name="Martinez-Rossi N.M."/>
            <person name="Martins E.C."/>
            <person name="Meidanis J."/>
            <person name="Menck C.F.M."/>
            <person name="Miyaki C.Y."/>
            <person name="Moon D.H."/>
            <person name="Moreira L.M."/>
            <person name="Novo M.T.M."/>
            <person name="Okura V.K."/>
            <person name="Oliveira M.C."/>
            <person name="Oliveira V.R."/>
            <person name="Pereira H.A."/>
            <person name="Rossi A."/>
            <person name="Sena J.A.D."/>
            <person name="Silva C."/>
            <person name="de Souza R.F."/>
            <person name="Spinola L.A.F."/>
            <person name="Takita M.A."/>
            <person name="Tamura R.E."/>
            <person name="Teixeira E.C."/>
            <person name="Tezza R.I.D."/>
            <person name="Trindade dos Santos M."/>
            <person name="Truffi D."/>
            <person name="Tsai S.M."/>
            <person name="White F.F."/>
            <person name="Setubal J.C."/>
            <person name="Kitajima J.P."/>
        </authorList>
    </citation>
    <scope>NUCLEOTIDE SEQUENCE [LARGE SCALE GENOMIC DNA]</scope>
    <source>
        <strain>ATCC 33913 / DSM 3586 / NCPPB 528 / LMG 568 / P 25</strain>
    </source>
</reference>